<reference key="1">
    <citation type="journal article" date="1993" name="Eur. J. Biochem.">
        <title>Molecular cloning of a 12-lipoxygenase cDNA from rat brain.</title>
        <authorList>
            <person name="Watanabe T."/>
            <person name="Medina J.F."/>
            <person name="Haeggstroem J.Z."/>
            <person name="Raadmark O.P."/>
            <person name="Samuelsson B."/>
        </authorList>
    </citation>
    <scope>NUCLEOTIDE SEQUENCE [MRNA]</scope>
    <scope>FUNCTION</scope>
    <scope>CATALYTIC ACTIVITY</scope>
    <scope>TISSUE SPECIFICITY</scope>
    <source>
        <strain>Sprague-Dawley</strain>
        <tissue>Brain</tissue>
    </source>
</reference>
<reference key="2">
    <citation type="journal article" date="1994" name="Biochim. Biophys. Acta">
        <title>Arachidonate 12-lipoxygenase of rat pineal glands: catalytic properties and primary structure deduced from its cDNA.</title>
        <authorList>
            <person name="Hada T."/>
            <person name="Hagiya H."/>
            <person name="Suzuki H."/>
            <person name="Arakawa T."/>
            <person name="Nakamura M."/>
            <person name="Matsuda S."/>
            <person name="Yoshimoto T."/>
            <person name="Yamamoto S."/>
            <person name="Azekawa T."/>
            <person name="Morita Y."/>
            <person name="Ishimura K."/>
            <person name="Kim H.Y."/>
        </authorList>
    </citation>
    <scope>NUCLEOTIDE SEQUENCE [MRNA]</scope>
    <scope>FUNCTION</scope>
    <scope>CATALYTIC ACTIVITY</scope>
    <scope>SUBCELLULAR LOCATION</scope>
    <source>
        <tissue>Pineal gland</tissue>
    </source>
</reference>
<reference key="3">
    <citation type="journal article" date="2004" name="J. Biol. Chem.">
        <title>The rat leukocyte-type 12-lipoxygenase exhibits an intrinsic hepoxilin A3 synthase activity.</title>
        <authorList>
            <person name="Nigam S."/>
            <person name="Patabhiraman S."/>
            <person name="Ciccoli R."/>
            <person name="Ishdorj G."/>
            <person name="Schwarz K."/>
            <person name="Petrucev B."/>
            <person name="Kuehn H."/>
            <person name="Haeggstroem J.Z."/>
        </authorList>
    </citation>
    <scope>NUCLEOTIDE SEQUENCE [MRNA]</scope>
    <scope>FUNCTION IN HEPOXILIN A3 SYNTHESIS</scope>
    <scope>CATALYTIC ACTIVITY</scope>
    <scope>SUBCELLULAR LOCATION</scope>
    <scope>MUTAGENESIS OF LEU-353; LYS-417 AND ALA-418</scope>
</reference>
<reference key="4">
    <citation type="journal article" date="2004" name="Nature">
        <title>Genome sequence of the Brown Norway rat yields insights into mammalian evolution.</title>
        <authorList>
            <person name="Gibbs R.A."/>
            <person name="Weinstock G.M."/>
            <person name="Metzker M.L."/>
            <person name="Muzny D.M."/>
            <person name="Sodergren E.J."/>
            <person name="Scherer S."/>
            <person name="Scott G."/>
            <person name="Steffen D."/>
            <person name="Worley K.C."/>
            <person name="Burch P.E."/>
            <person name="Okwuonu G."/>
            <person name="Hines S."/>
            <person name="Lewis L."/>
            <person name="Deramo C."/>
            <person name="Delgado O."/>
            <person name="Dugan-Rocha S."/>
            <person name="Miner G."/>
            <person name="Morgan M."/>
            <person name="Hawes A."/>
            <person name="Gill R."/>
            <person name="Holt R.A."/>
            <person name="Adams M.D."/>
            <person name="Amanatides P.G."/>
            <person name="Baden-Tillson H."/>
            <person name="Barnstead M."/>
            <person name="Chin S."/>
            <person name="Evans C.A."/>
            <person name="Ferriera S."/>
            <person name="Fosler C."/>
            <person name="Glodek A."/>
            <person name="Gu Z."/>
            <person name="Jennings D."/>
            <person name="Kraft C.L."/>
            <person name="Nguyen T."/>
            <person name="Pfannkoch C.M."/>
            <person name="Sitter C."/>
            <person name="Sutton G.G."/>
            <person name="Venter J.C."/>
            <person name="Woodage T."/>
            <person name="Smith D."/>
            <person name="Lee H.-M."/>
            <person name="Gustafson E."/>
            <person name="Cahill P."/>
            <person name="Kana A."/>
            <person name="Doucette-Stamm L."/>
            <person name="Weinstock K."/>
            <person name="Fechtel K."/>
            <person name="Weiss R.B."/>
            <person name="Dunn D.M."/>
            <person name="Green E.D."/>
            <person name="Blakesley R.W."/>
            <person name="Bouffard G.G."/>
            <person name="De Jong P.J."/>
            <person name="Osoegawa K."/>
            <person name="Zhu B."/>
            <person name="Marra M."/>
            <person name="Schein J."/>
            <person name="Bosdet I."/>
            <person name="Fjell C."/>
            <person name="Jones S."/>
            <person name="Krzywinski M."/>
            <person name="Mathewson C."/>
            <person name="Siddiqui A."/>
            <person name="Wye N."/>
            <person name="McPherson J."/>
            <person name="Zhao S."/>
            <person name="Fraser C.M."/>
            <person name="Shetty J."/>
            <person name="Shatsman S."/>
            <person name="Geer K."/>
            <person name="Chen Y."/>
            <person name="Abramzon S."/>
            <person name="Nierman W.C."/>
            <person name="Havlak P.H."/>
            <person name="Chen R."/>
            <person name="Durbin K.J."/>
            <person name="Egan A."/>
            <person name="Ren Y."/>
            <person name="Song X.-Z."/>
            <person name="Li B."/>
            <person name="Liu Y."/>
            <person name="Qin X."/>
            <person name="Cawley S."/>
            <person name="Cooney A.J."/>
            <person name="D'Souza L.M."/>
            <person name="Martin K."/>
            <person name="Wu J.Q."/>
            <person name="Gonzalez-Garay M.L."/>
            <person name="Jackson A.R."/>
            <person name="Kalafus K.J."/>
            <person name="McLeod M.P."/>
            <person name="Milosavljevic A."/>
            <person name="Virk D."/>
            <person name="Volkov A."/>
            <person name="Wheeler D.A."/>
            <person name="Zhang Z."/>
            <person name="Bailey J.A."/>
            <person name="Eichler E.E."/>
            <person name="Tuzun E."/>
            <person name="Birney E."/>
            <person name="Mongin E."/>
            <person name="Ureta-Vidal A."/>
            <person name="Woodwark C."/>
            <person name="Zdobnov E."/>
            <person name="Bork P."/>
            <person name="Suyama M."/>
            <person name="Torrents D."/>
            <person name="Alexandersson M."/>
            <person name="Trask B.J."/>
            <person name="Young J.M."/>
            <person name="Huang H."/>
            <person name="Wang H."/>
            <person name="Xing H."/>
            <person name="Daniels S."/>
            <person name="Gietzen D."/>
            <person name="Schmidt J."/>
            <person name="Stevens K."/>
            <person name="Vitt U."/>
            <person name="Wingrove J."/>
            <person name="Camara F."/>
            <person name="Mar Alba M."/>
            <person name="Abril J.F."/>
            <person name="Guigo R."/>
            <person name="Smit A."/>
            <person name="Dubchak I."/>
            <person name="Rubin E.M."/>
            <person name="Couronne O."/>
            <person name="Poliakov A."/>
            <person name="Huebner N."/>
            <person name="Ganten D."/>
            <person name="Goesele C."/>
            <person name="Hummel O."/>
            <person name="Kreitler T."/>
            <person name="Lee Y.-A."/>
            <person name="Monti J."/>
            <person name="Schulz H."/>
            <person name="Zimdahl H."/>
            <person name="Himmelbauer H."/>
            <person name="Lehrach H."/>
            <person name="Jacob H.J."/>
            <person name="Bromberg S."/>
            <person name="Gullings-Handley J."/>
            <person name="Jensen-Seaman M.I."/>
            <person name="Kwitek A.E."/>
            <person name="Lazar J."/>
            <person name="Pasko D."/>
            <person name="Tonellato P.J."/>
            <person name="Twigger S."/>
            <person name="Ponting C.P."/>
            <person name="Duarte J.M."/>
            <person name="Rice S."/>
            <person name="Goodstadt L."/>
            <person name="Beatson S.A."/>
            <person name="Emes R.D."/>
            <person name="Winter E.E."/>
            <person name="Webber C."/>
            <person name="Brandt P."/>
            <person name="Nyakatura G."/>
            <person name="Adetobi M."/>
            <person name="Chiaromonte F."/>
            <person name="Elnitski L."/>
            <person name="Eswara P."/>
            <person name="Hardison R.C."/>
            <person name="Hou M."/>
            <person name="Kolbe D."/>
            <person name="Makova K."/>
            <person name="Miller W."/>
            <person name="Nekrutenko A."/>
            <person name="Riemer C."/>
            <person name="Schwartz S."/>
            <person name="Taylor J."/>
            <person name="Yang S."/>
            <person name="Zhang Y."/>
            <person name="Lindpaintner K."/>
            <person name="Andrews T.D."/>
            <person name="Caccamo M."/>
            <person name="Clamp M."/>
            <person name="Clarke L."/>
            <person name="Curwen V."/>
            <person name="Durbin R.M."/>
            <person name="Eyras E."/>
            <person name="Searle S.M."/>
            <person name="Cooper G.M."/>
            <person name="Batzoglou S."/>
            <person name="Brudno M."/>
            <person name="Sidow A."/>
            <person name="Stone E.A."/>
            <person name="Payseur B.A."/>
            <person name="Bourque G."/>
            <person name="Lopez-Otin C."/>
            <person name="Puente X.S."/>
            <person name="Chakrabarti K."/>
            <person name="Chatterji S."/>
            <person name="Dewey C."/>
            <person name="Pachter L."/>
            <person name="Bray N."/>
            <person name="Yap V.B."/>
            <person name="Caspi A."/>
            <person name="Tesler G."/>
            <person name="Pevzner P.A."/>
            <person name="Haussler D."/>
            <person name="Roskin K.M."/>
            <person name="Baertsch R."/>
            <person name="Clawson H."/>
            <person name="Furey T.S."/>
            <person name="Hinrichs A.S."/>
            <person name="Karolchik D."/>
            <person name="Kent W.J."/>
            <person name="Rosenbloom K.R."/>
            <person name="Trumbower H."/>
            <person name="Weirauch M."/>
            <person name="Cooper D.N."/>
            <person name="Stenson P.D."/>
            <person name="Ma B."/>
            <person name="Brent M."/>
            <person name="Arumugam M."/>
            <person name="Shteynberg D."/>
            <person name="Copley R.R."/>
            <person name="Taylor M.S."/>
            <person name="Riethman H."/>
            <person name="Mudunuri U."/>
            <person name="Peterson J."/>
            <person name="Guyer M."/>
            <person name="Felsenfeld A."/>
            <person name="Old S."/>
            <person name="Mockrin S."/>
            <person name="Collins F.S."/>
        </authorList>
    </citation>
    <scope>NUCLEOTIDE SEQUENCE [LARGE SCALE GENOMIC DNA]</scope>
    <source>
        <strain>Brown Norway</strain>
    </source>
</reference>
<reference key="5">
    <citation type="journal article" date="2012" name="Nat. Commun.">
        <title>Quantitative maps of protein phosphorylation sites across 14 different rat organs and tissues.</title>
        <authorList>
            <person name="Lundby A."/>
            <person name="Secher A."/>
            <person name="Lage K."/>
            <person name="Nordsborg N.B."/>
            <person name="Dmytriyev A."/>
            <person name="Lundby C."/>
            <person name="Olsen J.V."/>
        </authorList>
    </citation>
    <scope>PHOSPHORYLATION [LARGE SCALE ANALYSIS] AT SER-149</scope>
    <scope>IDENTIFICATION BY MASS SPECTROMETRY [LARGE SCALE ANALYSIS]</scope>
</reference>
<reference key="6">
    <citation type="journal article" date="2013" name="FASEB J.">
        <title>Systematic analysis of rat 12/15-lipoxygenase enzymes reveals critical role for spinal eLOX3 hepoxilin synthase activity in inflammatory hyperalgesia.</title>
        <authorList>
            <person name="Gregus A.M."/>
            <person name="Dumlao D.S."/>
            <person name="Wei S.C."/>
            <person name="Norris P.C."/>
            <person name="Catella L.C."/>
            <person name="Meyerstein F.G."/>
            <person name="Buczynski M.W."/>
            <person name="Steinauer J.J."/>
            <person name="Fitzsimmons B.L."/>
            <person name="Yaksh T.L."/>
            <person name="Dennis E.A."/>
        </authorList>
    </citation>
    <scope>FUNCTION</scope>
</reference>
<proteinExistence type="evidence at protein level"/>
<sequence length="663" mass="75378">MGVYRIRVSTGDSKYAGSNNEVYLWLVGQHGEASLGKLLRPCRDSEAEFKVDVSEYLGPLLFVRVQKWHYLTDDAWFCNWISVKGPGDQGSEYMFPCYRWVQGRSILSLPEGTGCTVVEDSQGLFRKHREEELEERRSLYRWGNWKDGSILNVAAASISDLPVDQRFREDKRIEFEASQVIGVMDTVVNFPINTVTCWKSLDDFNCVFKSGHTKMAERVRNSWKEDAFFGYQFLNGANPMVLKRSTCLPARLVFPPGMEKLQAQLNKELQKGTLFEADFFLLDGIKANVILCSQQYLAAPLVMLKLMPDGQLLPIAIQLELPKTGSTPPPIFTPSDPPMDWLLAKCWVRSSDLQLHELQAHLLRGHLMAEVFAVATMRCLPSVHPVFKLLVPHLLYTMEINVRARSDLISERGFFDKAMSTGGGGHLDLLKQAGAFLTYCSLCPPDDLAERGLLDIETCFYAKDALRLWQIMNRYVVGMFNLHYKTDKAVQDDYELQSWCREITDIGLQGAQDRGFPTSLQSRAQACYFITMCIFTCTAQHSSVHLGQLDWFYWVPNAPCTMRLPPPTTKEATMEKLMATLPNPNQSTLQINVVWLLGRRQAVMVPLGQHSEEHFPNPEAKAVLKKFREELAALDKEIEIRNKSLDIPYEYLRPSMVENSVAI</sequence>
<organism>
    <name type="scientific">Rattus norvegicus</name>
    <name type="common">Rat</name>
    <dbReference type="NCBI Taxonomy" id="10116"/>
    <lineage>
        <taxon>Eukaryota</taxon>
        <taxon>Metazoa</taxon>
        <taxon>Chordata</taxon>
        <taxon>Craniata</taxon>
        <taxon>Vertebrata</taxon>
        <taxon>Euteleostomi</taxon>
        <taxon>Mammalia</taxon>
        <taxon>Eutheria</taxon>
        <taxon>Euarchontoglires</taxon>
        <taxon>Glires</taxon>
        <taxon>Rodentia</taxon>
        <taxon>Myomorpha</taxon>
        <taxon>Muroidea</taxon>
        <taxon>Muridae</taxon>
        <taxon>Murinae</taxon>
        <taxon>Rattus</taxon>
    </lineage>
</organism>
<feature type="chain" id="PRO_0000220687" description="Polyunsaturated fatty acid lipoxygenase ALOX15">
    <location>
        <begin position="1"/>
        <end position="663"/>
    </location>
</feature>
<feature type="domain" description="PLAT" evidence="6">
    <location>
        <begin position="2"/>
        <end position="115"/>
    </location>
</feature>
<feature type="domain" description="Lipoxygenase" evidence="7">
    <location>
        <begin position="116"/>
        <end position="663"/>
    </location>
</feature>
<feature type="binding site" evidence="7">
    <location>
        <position position="361"/>
    </location>
    <ligand>
        <name>Fe cation</name>
        <dbReference type="ChEBI" id="CHEBI:24875"/>
        <note>catalytic</note>
    </ligand>
</feature>
<feature type="binding site" evidence="7">
    <location>
        <position position="366"/>
    </location>
    <ligand>
        <name>Fe cation</name>
        <dbReference type="ChEBI" id="CHEBI:24875"/>
        <note>catalytic</note>
    </ligand>
</feature>
<feature type="binding site" evidence="7">
    <location>
        <position position="541"/>
    </location>
    <ligand>
        <name>Fe cation</name>
        <dbReference type="ChEBI" id="CHEBI:24875"/>
        <note>catalytic</note>
    </ligand>
</feature>
<feature type="binding site" evidence="7">
    <location>
        <position position="545"/>
    </location>
    <ligand>
        <name>Fe cation</name>
        <dbReference type="ChEBI" id="CHEBI:24875"/>
        <note>catalytic</note>
    </ligand>
</feature>
<feature type="binding site" evidence="7">
    <location>
        <position position="663"/>
    </location>
    <ligand>
        <name>Fe cation</name>
        <dbReference type="ChEBI" id="CHEBI:24875"/>
        <note>catalytic</note>
    </ligand>
</feature>
<feature type="modified residue" description="Phosphoserine" evidence="18">
    <location>
        <position position="149"/>
    </location>
</feature>
<feature type="mutagenesis site" description="Decreases arachidonic acid 12 lipoxygenase. Exhibits an arachidonic acid 15 lipoxygenase. Decreases hepoxilin A3 synthase activity." evidence="9">
    <original>L</original>
    <variation>F</variation>
    <location>
        <position position="353"/>
    </location>
</feature>
<feature type="mutagenesis site" description="Does not affect arachidonic acid 12 lipoxygenase. Does not affect hepoxilin A3 synthase activity." evidence="9">
    <original>K</original>
    <variation>Q</variation>
    <location>
        <position position="417"/>
    </location>
</feature>
<feature type="mutagenesis site" description="Does not affect arachidonic acid 12 lipoxygenase. Does not affect hepoxilin A3 synthase activity." evidence="9">
    <original>A</original>
    <variation>I</variation>
    <location>
        <position position="418"/>
    </location>
</feature>
<feature type="sequence conflict" description="In Ref. 2; AAB30132." evidence="15" ref="2">
    <original>E</original>
    <variation>G</variation>
    <location>
        <position position="55"/>
    </location>
</feature>
<feature type="sequence conflict" description="In Ref. 1; AAA41532." evidence="15" ref="1">
    <original>V</original>
    <variation>L</variation>
    <location>
        <position position="371"/>
    </location>
</feature>
<accession>Q02759</accession>
<accession>F1MA51</accession>
<name>LOX15_RAT</name>
<protein>
    <recommendedName>
        <fullName evidence="15">Polyunsaturated fatty acid lipoxygenase ALOX15</fullName>
    </recommendedName>
    <alternativeName>
        <fullName evidence="5">12/15-lipoxygenase</fullName>
    </alternativeName>
    <alternativeName>
        <fullName evidence="14">Arachidonate 12-lipoxygenase, leukocyte-type</fullName>
        <shortName>12-LOX</shortName>
        <ecNumber evidence="11 12">1.13.11.31</ecNumber>
    </alternativeName>
    <alternativeName>
        <fullName>Arachidonate 15-lipoxygenase</fullName>
        <shortName>15-LOX</shortName>
        <ecNumber evidence="11 12">1.13.11.33</ecNumber>
    </alternativeName>
    <alternativeName>
        <fullName evidence="3">Arachidonate omega-6 lipoxygenase</fullName>
    </alternativeName>
    <alternativeName>
        <fullName evidence="13">Hepoxilin A3 synthase Alox15</fullName>
        <ecNumber evidence="8">1.13.11.-</ecNumber>
    </alternativeName>
    <alternativeName>
        <fullName evidence="3">Linoleate 13S-lipoxygenase</fullName>
        <ecNumber evidence="3">1.13.11.12</ecNumber>
    </alternativeName>
</protein>
<keyword id="KW-0106">Calcium</keyword>
<keyword id="KW-1003">Cell membrane</keyword>
<keyword id="KW-0963">Cytoplasm</keyword>
<keyword id="KW-0223">Dioxygenase</keyword>
<keyword id="KW-0276">Fatty acid metabolism</keyword>
<keyword id="KW-0408">Iron</keyword>
<keyword id="KW-0551">Lipid droplet</keyword>
<keyword id="KW-0443">Lipid metabolism</keyword>
<keyword id="KW-0446">Lipid-binding</keyword>
<keyword id="KW-0472">Membrane</keyword>
<keyword id="KW-0479">Metal-binding</keyword>
<keyword id="KW-0560">Oxidoreductase</keyword>
<keyword id="KW-0597">Phosphoprotein</keyword>
<keyword id="KW-1185">Reference proteome</keyword>
<evidence type="ECO:0000250" key="1"/>
<evidence type="ECO:0000250" key="2">
    <source>
        <dbReference type="UniProtKB" id="P12530"/>
    </source>
</evidence>
<evidence type="ECO:0000250" key="3">
    <source>
        <dbReference type="UniProtKB" id="P16050"/>
    </source>
</evidence>
<evidence type="ECO:0000250" key="4">
    <source>
        <dbReference type="UniProtKB" id="P16469"/>
    </source>
</evidence>
<evidence type="ECO:0000250" key="5">
    <source>
        <dbReference type="UniProtKB" id="P39654"/>
    </source>
</evidence>
<evidence type="ECO:0000255" key="6">
    <source>
        <dbReference type="PROSITE-ProRule" id="PRU00152"/>
    </source>
</evidence>
<evidence type="ECO:0000255" key="7">
    <source>
        <dbReference type="PROSITE-ProRule" id="PRU00726"/>
    </source>
</evidence>
<evidence type="ECO:0000269" key="8">
    <source>
    </source>
</evidence>
<evidence type="ECO:0000269" key="9">
    <source>
    </source>
</evidence>
<evidence type="ECO:0000269" key="10">
    <source>
    </source>
</evidence>
<evidence type="ECO:0000269" key="11">
    <source>
    </source>
</evidence>
<evidence type="ECO:0000269" key="12">
    <source>
    </source>
</evidence>
<evidence type="ECO:0000303" key="13">
    <source>
    </source>
</evidence>
<evidence type="ECO:0000303" key="14">
    <source>
    </source>
</evidence>
<evidence type="ECO:0000305" key="15"/>
<evidence type="ECO:0000305" key="16">
    <source>
    </source>
</evidence>
<evidence type="ECO:0000312" key="17">
    <source>
        <dbReference type="RGD" id="70493"/>
    </source>
</evidence>
<evidence type="ECO:0007744" key="18">
    <source>
    </source>
</evidence>
<dbReference type="EC" id="1.13.11.31" evidence="11 12"/>
<dbReference type="EC" id="1.13.11.33" evidence="11 12"/>
<dbReference type="EC" id="1.13.11.-" evidence="8"/>
<dbReference type="EC" id="1.13.11.12" evidence="3"/>
<dbReference type="EMBL" id="L06040">
    <property type="protein sequence ID" value="AAA41532.1"/>
    <property type="molecule type" value="mRNA"/>
</dbReference>
<dbReference type="EMBL" id="S69383">
    <property type="protein sequence ID" value="AAB30132.1"/>
    <property type="molecule type" value="mRNA"/>
</dbReference>
<dbReference type="EMBL" id="AABR06064408">
    <property type="status" value="NOT_ANNOTATED_CDS"/>
    <property type="molecule type" value="Genomic_DNA"/>
</dbReference>
<dbReference type="PIR" id="I52462">
    <property type="entry name" value="I52462"/>
</dbReference>
<dbReference type="PIR" id="S30051">
    <property type="entry name" value="S30051"/>
</dbReference>
<dbReference type="RefSeq" id="NP_112272.2">
    <property type="nucleotide sequence ID" value="NM_031010.2"/>
</dbReference>
<dbReference type="SMR" id="Q02759"/>
<dbReference type="BioGRID" id="249539">
    <property type="interactions" value="1"/>
</dbReference>
<dbReference type="FunCoup" id="Q02759">
    <property type="interactions" value="18"/>
</dbReference>
<dbReference type="IntAct" id="Q02759">
    <property type="interactions" value="1"/>
</dbReference>
<dbReference type="STRING" id="10116.ENSRNOP00000026038"/>
<dbReference type="BindingDB" id="Q02759"/>
<dbReference type="ChEMBL" id="CHEMBL2741"/>
<dbReference type="SwissLipids" id="SLP:000001609"/>
<dbReference type="iPTMnet" id="Q02759"/>
<dbReference type="PhosphoSitePlus" id="Q02759"/>
<dbReference type="PaxDb" id="10116-ENSRNOP00000026038"/>
<dbReference type="Ensembl" id="ENSRNOT00000026038.7">
    <property type="protein sequence ID" value="ENSRNOP00000026038.4"/>
    <property type="gene ID" value="ENSRNOG00000019183.7"/>
</dbReference>
<dbReference type="GeneID" id="81639"/>
<dbReference type="KEGG" id="rno:81639"/>
<dbReference type="UCSC" id="RGD:70493">
    <property type="organism name" value="rat"/>
</dbReference>
<dbReference type="AGR" id="RGD:70493"/>
<dbReference type="CTD" id="246"/>
<dbReference type="RGD" id="70493">
    <property type="gene designation" value="Alox15"/>
</dbReference>
<dbReference type="eggNOG" id="ENOG502QQSP">
    <property type="taxonomic scope" value="Eukaryota"/>
</dbReference>
<dbReference type="GeneTree" id="ENSGT00940000162807"/>
<dbReference type="HOGENOM" id="CLU_004282_3_3_1"/>
<dbReference type="InParanoid" id="Q02759"/>
<dbReference type="OrthoDB" id="407298at2759"/>
<dbReference type="TreeFam" id="TF105320"/>
<dbReference type="BRENDA" id="1.13.11.31">
    <property type="organism ID" value="5301"/>
</dbReference>
<dbReference type="BRENDA" id="1.13.11.33">
    <property type="organism ID" value="5301"/>
</dbReference>
<dbReference type="Reactome" id="R-RNO-2142691">
    <property type="pathway name" value="Synthesis of Leukotrienes (LT) and Eoxins (EX)"/>
</dbReference>
<dbReference type="Reactome" id="R-RNO-2142712">
    <property type="pathway name" value="Synthesis of 12-eicosatetraenoic acid derivatives"/>
</dbReference>
<dbReference type="Reactome" id="R-RNO-2142770">
    <property type="pathway name" value="Synthesis of 15-eicosatetraenoic acid derivatives"/>
</dbReference>
<dbReference type="Reactome" id="R-RNO-9018677">
    <property type="pathway name" value="Biosynthesis of DHA-derived SPMs"/>
</dbReference>
<dbReference type="Reactome" id="R-RNO-9018681">
    <property type="pathway name" value="Biosynthesis of protectins"/>
</dbReference>
<dbReference type="Reactome" id="R-RNO-9018896">
    <property type="pathway name" value="Biosynthesis of E-series 18(S)-resolvins"/>
</dbReference>
<dbReference type="Reactome" id="R-RNO-9023661">
    <property type="pathway name" value="Biosynthesis of E-series 18(R)-resolvins"/>
</dbReference>
<dbReference type="Reactome" id="R-RNO-9025106">
    <property type="pathway name" value="Biosynthesis of DPAn-6 SPMs"/>
</dbReference>
<dbReference type="Reactome" id="R-RNO-9026286">
    <property type="pathway name" value="Biosynthesis of DPAn-3-derived protectins and resolvins"/>
</dbReference>
<dbReference type="UniPathway" id="UPA00881"/>
<dbReference type="PRO" id="PR:Q02759"/>
<dbReference type="Proteomes" id="UP000002494">
    <property type="component" value="Chromosome 10"/>
</dbReference>
<dbReference type="Bgee" id="ENSRNOG00000019183">
    <property type="expression patterns" value="Expressed in spleen and 17 other cell types or tissues"/>
</dbReference>
<dbReference type="GO" id="GO:0005737">
    <property type="term" value="C:cytoplasm"/>
    <property type="evidence" value="ECO:0000266"/>
    <property type="project" value="RGD"/>
</dbReference>
<dbReference type="GO" id="GO:0009898">
    <property type="term" value="C:cytoplasmic side of plasma membrane"/>
    <property type="evidence" value="ECO:0000250"/>
    <property type="project" value="UniProtKB"/>
</dbReference>
<dbReference type="GO" id="GO:0005829">
    <property type="term" value="C:cytosol"/>
    <property type="evidence" value="ECO:0000314"/>
    <property type="project" value="UniProtKB"/>
</dbReference>
<dbReference type="GO" id="GO:0005811">
    <property type="term" value="C:lipid droplet"/>
    <property type="evidence" value="ECO:0000250"/>
    <property type="project" value="UniProtKB"/>
</dbReference>
<dbReference type="GO" id="GO:0016020">
    <property type="term" value="C:membrane"/>
    <property type="evidence" value="ECO:0000250"/>
    <property type="project" value="UniProtKB"/>
</dbReference>
<dbReference type="GO" id="GO:0005886">
    <property type="term" value="C:plasma membrane"/>
    <property type="evidence" value="ECO:0000250"/>
    <property type="project" value="UniProtKB"/>
</dbReference>
<dbReference type="GO" id="GO:0042383">
    <property type="term" value="C:sarcolemma"/>
    <property type="evidence" value="ECO:0000250"/>
    <property type="project" value="UniProtKB"/>
</dbReference>
<dbReference type="GO" id="GO:0004052">
    <property type="term" value="F:arachidonate 12(S)-lipoxygenase activity"/>
    <property type="evidence" value="ECO:0000314"/>
    <property type="project" value="RGD"/>
</dbReference>
<dbReference type="GO" id="GO:0050473">
    <property type="term" value="F:arachidonate 15-lipoxygenase activity"/>
    <property type="evidence" value="ECO:0000314"/>
    <property type="project" value="RGD"/>
</dbReference>
<dbReference type="GO" id="GO:0047977">
    <property type="term" value="F:hepoxilin-epoxide hydrolase activity"/>
    <property type="evidence" value="ECO:0000314"/>
    <property type="project" value="UniProtKB"/>
</dbReference>
<dbReference type="GO" id="GO:0005506">
    <property type="term" value="F:iron ion binding"/>
    <property type="evidence" value="ECO:0000250"/>
    <property type="project" value="UniProtKB"/>
</dbReference>
<dbReference type="GO" id="GO:0016165">
    <property type="term" value="F:linoleate 13S-lipoxygenase activity"/>
    <property type="evidence" value="ECO:0000250"/>
    <property type="project" value="UniProtKB"/>
</dbReference>
<dbReference type="GO" id="GO:0005546">
    <property type="term" value="F:phosphatidylinositol-4,5-bisphosphate binding"/>
    <property type="evidence" value="ECO:0000250"/>
    <property type="project" value="UniProtKB"/>
</dbReference>
<dbReference type="GO" id="GO:0019870">
    <property type="term" value="F:potassium channel inhibitor activity"/>
    <property type="evidence" value="ECO:0000304"/>
    <property type="project" value="UniProtKB"/>
</dbReference>
<dbReference type="GO" id="GO:0043277">
    <property type="term" value="P:apoptotic cell clearance"/>
    <property type="evidence" value="ECO:0000250"/>
    <property type="project" value="UniProtKB"/>
</dbReference>
<dbReference type="GO" id="GO:0019369">
    <property type="term" value="P:arachidonate metabolic process"/>
    <property type="evidence" value="ECO:0000314"/>
    <property type="project" value="UniProtKB"/>
</dbReference>
<dbReference type="GO" id="GO:0030282">
    <property type="term" value="P:bone mineralization"/>
    <property type="evidence" value="ECO:0000250"/>
    <property type="project" value="UniProtKB"/>
</dbReference>
<dbReference type="GO" id="GO:0071277">
    <property type="term" value="P:cellular response to calcium ion"/>
    <property type="evidence" value="ECO:0000250"/>
    <property type="project" value="UniProtKB"/>
</dbReference>
<dbReference type="GO" id="GO:0035963">
    <property type="term" value="P:cellular response to interleukin-13"/>
    <property type="evidence" value="ECO:0000250"/>
    <property type="project" value="UniProtKB"/>
</dbReference>
<dbReference type="GO" id="GO:0019395">
    <property type="term" value="P:fatty acid oxidation"/>
    <property type="evidence" value="ECO:0000250"/>
    <property type="project" value="UniProtKB"/>
</dbReference>
<dbReference type="GO" id="GO:0051122">
    <property type="term" value="P:hepoxilin biosynthetic process"/>
    <property type="evidence" value="ECO:0000314"/>
    <property type="project" value="UniProtKB"/>
</dbReference>
<dbReference type="GO" id="GO:0046456">
    <property type="term" value="P:icosanoid biosynthetic process"/>
    <property type="evidence" value="ECO:0000303"/>
    <property type="project" value="UniProtKB"/>
</dbReference>
<dbReference type="GO" id="GO:0043651">
    <property type="term" value="P:linoleic acid metabolic process"/>
    <property type="evidence" value="ECO:0000250"/>
    <property type="project" value="UniProtKB"/>
</dbReference>
<dbReference type="GO" id="GO:0006629">
    <property type="term" value="P:lipid metabolic process"/>
    <property type="evidence" value="ECO:0000266"/>
    <property type="project" value="RGD"/>
</dbReference>
<dbReference type="GO" id="GO:0034440">
    <property type="term" value="P:lipid oxidation"/>
    <property type="evidence" value="ECO:0000318"/>
    <property type="project" value="GO_Central"/>
</dbReference>
<dbReference type="GO" id="GO:2001303">
    <property type="term" value="P:lipoxin A4 biosynthetic process"/>
    <property type="evidence" value="ECO:0000250"/>
    <property type="project" value="UniProtKB"/>
</dbReference>
<dbReference type="GO" id="GO:0019372">
    <property type="term" value="P:lipoxygenase pathway"/>
    <property type="evidence" value="ECO:0000314"/>
    <property type="project" value="RGD"/>
</dbReference>
<dbReference type="GO" id="GO:0002820">
    <property type="term" value="P:negative regulation of adaptive immune response"/>
    <property type="evidence" value="ECO:0000250"/>
    <property type="project" value="UniProtKB"/>
</dbReference>
<dbReference type="GO" id="GO:0045794">
    <property type="term" value="P:negative regulation of cell volume"/>
    <property type="evidence" value="ECO:0000304"/>
    <property type="project" value="UniProtKB"/>
</dbReference>
<dbReference type="GO" id="GO:0001503">
    <property type="term" value="P:ossification"/>
    <property type="evidence" value="ECO:0000250"/>
    <property type="project" value="UniProtKB"/>
</dbReference>
<dbReference type="GO" id="GO:0006646">
    <property type="term" value="P:phosphatidylethanolamine biosynthetic process"/>
    <property type="evidence" value="ECO:0000250"/>
    <property type="project" value="UniProtKB"/>
</dbReference>
<dbReference type="GO" id="GO:0030838">
    <property type="term" value="P:positive regulation of actin filament polymerization"/>
    <property type="evidence" value="ECO:0000250"/>
    <property type="project" value="UniProtKB"/>
</dbReference>
<dbReference type="GO" id="GO:0010811">
    <property type="term" value="P:positive regulation of cell-substrate adhesion"/>
    <property type="evidence" value="ECO:0000250"/>
    <property type="project" value="UniProtKB"/>
</dbReference>
<dbReference type="GO" id="GO:0070374">
    <property type="term" value="P:positive regulation of ERK1 and ERK2 cascade"/>
    <property type="evidence" value="ECO:0000250"/>
    <property type="project" value="UniProtKB"/>
</dbReference>
<dbReference type="GO" id="GO:0034116">
    <property type="term" value="P:positive regulation of heterotypic cell-cell adhesion"/>
    <property type="evidence" value="ECO:0000315"/>
    <property type="project" value="RGD"/>
</dbReference>
<dbReference type="GO" id="GO:1901074">
    <property type="term" value="P:regulation of engulfment of apoptotic cell"/>
    <property type="evidence" value="ECO:0000250"/>
    <property type="project" value="UniProtKB"/>
</dbReference>
<dbReference type="GO" id="GO:0050727">
    <property type="term" value="P:regulation of inflammatory response"/>
    <property type="evidence" value="ECO:0000250"/>
    <property type="project" value="UniProtKB"/>
</dbReference>
<dbReference type="GO" id="GO:0042391">
    <property type="term" value="P:regulation of membrane potential"/>
    <property type="evidence" value="ECO:0000304"/>
    <property type="project" value="UniProtKB"/>
</dbReference>
<dbReference type="GO" id="GO:0035358">
    <property type="term" value="P:regulation of peroxisome proliferator activated receptor signaling pathway"/>
    <property type="evidence" value="ECO:0000250"/>
    <property type="project" value="UniProtKB"/>
</dbReference>
<dbReference type="GO" id="GO:0034976">
    <property type="term" value="P:response to endoplasmic reticulum stress"/>
    <property type="evidence" value="ECO:0000250"/>
    <property type="project" value="UniProtKB"/>
</dbReference>
<dbReference type="GO" id="GO:0042060">
    <property type="term" value="P:wound healing"/>
    <property type="evidence" value="ECO:0000250"/>
    <property type="project" value="UniProtKB"/>
</dbReference>
<dbReference type="CDD" id="cd01753">
    <property type="entry name" value="PLAT_LOX"/>
    <property type="match status" value="1"/>
</dbReference>
<dbReference type="FunFam" id="3.10.450.60:FF:000004">
    <property type="entry name" value="Arachidonate 12-lipoxygenase, 12S-type"/>
    <property type="match status" value="1"/>
</dbReference>
<dbReference type="FunFam" id="1.20.245.10:FF:000001">
    <property type="entry name" value="Arachidonate 5-lipoxygenase a"/>
    <property type="match status" value="1"/>
</dbReference>
<dbReference type="FunFam" id="2.60.60.20:FF:000002">
    <property type="entry name" value="Arachidonate 5-lipoxygenase a"/>
    <property type="match status" value="1"/>
</dbReference>
<dbReference type="Gene3D" id="3.10.450.60">
    <property type="match status" value="1"/>
</dbReference>
<dbReference type="Gene3D" id="1.20.245.10">
    <property type="entry name" value="Lipoxygenase-1, Domain 5"/>
    <property type="match status" value="1"/>
</dbReference>
<dbReference type="Gene3D" id="2.60.60.20">
    <property type="entry name" value="PLAT/LH2 domain"/>
    <property type="match status" value="1"/>
</dbReference>
<dbReference type="InterPro" id="IPR000907">
    <property type="entry name" value="LipOase"/>
</dbReference>
<dbReference type="InterPro" id="IPR013819">
    <property type="entry name" value="LipOase_C"/>
</dbReference>
<dbReference type="InterPro" id="IPR036226">
    <property type="entry name" value="LipOase_C_sf"/>
</dbReference>
<dbReference type="InterPro" id="IPR020834">
    <property type="entry name" value="LipOase_CS"/>
</dbReference>
<dbReference type="InterPro" id="IPR020833">
    <property type="entry name" value="LipOase_Fe_BS"/>
</dbReference>
<dbReference type="InterPro" id="IPR001885">
    <property type="entry name" value="LipOase_mml"/>
</dbReference>
<dbReference type="InterPro" id="IPR001024">
    <property type="entry name" value="PLAT/LH2_dom"/>
</dbReference>
<dbReference type="InterPro" id="IPR036392">
    <property type="entry name" value="PLAT/LH2_dom_sf"/>
</dbReference>
<dbReference type="InterPro" id="IPR042062">
    <property type="entry name" value="PLAT_LOX_verte"/>
</dbReference>
<dbReference type="PANTHER" id="PTHR11771">
    <property type="entry name" value="LIPOXYGENASE"/>
    <property type="match status" value="1"/>
</dbReference>
<dbReference type="Pfam" id="PF00305">
    <property type="entry name" value="Lipoxygenase"/>
    <property type="match status" value="1"/>
</dbReference>
<dbReference type="Pfam" id="PF01477">
    <property type="entry name" value="PLAT"/>
    <property type="match status" value="1"/>
</dbReference>
<dbReference type="PRINTS" id="PR00087">
    <property type="entry name" value="LIPOXYGENASE"/>
</dbReference>
<dbReference type="PRINTS" id="PR00467">
    <property type="entry name" value="MAMLPOXGNASE"/>
</dbReference>
<dbReference type="SMART" id="SM00308">
    <property type="entry name" value="LH2"/>
    <property type="match status" value="1"/>
</dbReference>
<dbReference type="SUPFAM" id="SSF49723">
    <property type="entry name" value="Lipase/lipooxygenase domain (PLAT/LH2 domain)"/>
    <property type="match status" value="1"/>
</dbReference>
<dbReference type="SUPFAM" id="SSF48484">
    <property type="entry name" value="Lipoxigenase"/>
    <property type="match status" value="1"/>
</dbReference>
<dbReference type="PROSITE" id="PS00711">
    <property type="entry name" value="LIPOXYGENASE_1"/>
    <property type="match status" value="1"/>
</dbReference>
<dbReference type="PROSITE" id="PS00081">
    <property type="entry name" value="LIPOXYGENASE_2"/>
    <property type="match status" value="1"/>
</dbReference>
<dbReference type="PROSITE" id="PS51393">
    <property type="entry name" value="LIPOXYGENASE_3"/>
    <property type="match status" value="1"/>
</dbReference>
<dbReference type="PROSITE" id="PS50095">
    <property type="entry name" value="PLAT"/>
    <property type="match status" value="1"/>
</dbReference>
<comment type="function">
    <text evidence="3 5 9 10 11 12">Non-heme iron-containing dioxygenase that catalyzes the stereo-specific peroxidation of free and esterified polyunsaturated fatty acids generating a spectrum of bioactive lipid mediators (PubMed:15123652, PubMed:23382512, PubMed:8117750, PubMed:8444196). It inserts peroxyl groups at C12 or C15 of arachidonate ((5Z,8Z,11Z,14Z)-eicosatetraenoate) producing both 12-hydroperoxyeicosatetraenoate/12-HPETE and 15-hydroperoxyeicosatetraenoate/15-HPETE (PubMed:15123652, PubMed:23382512, PubMed:8117750, PubMed:8444196). It may then act on 12-HPETE to produce hepoxilins, which may show pro-inflammatory properties (PubMed:15123652, PubMed:23382512). Can also peroxidize linoleate ((9Z,12Z)-octadecadienoate) to 13-hydroperoxyoctadecadienoate. May participate in the sequential oxidations of DHA ((4Z,7Z,10Z,13Z,16Z,19Z)-docosahexaenoate) to generate specialized pro-resolving mediators (SPMs)like resolvin D5 ((7S,17S)-diHPDHA) and (7S,14S)-diHPDHA, that actively down-regulate the immune response and have anti-aggregation properties with platelets. Can convert epoxy fatty acids to hydroperoxy-epoxides derivatives followed by an intramolecular nucleophilic substitution leading to the formation of monocyclic endoperoxides (By similarity). Plays an important role during the maintenance of self-tolerance by peroxidizing membrane-bound phosphatidylethanolamine which can then signal the sorting process for clearance of apoptotic cells during inflammation and prevent an autoimmune response. In addition to its role in the immune and inflammatory responses, this enzyme may play a role in epithelial wound healing in the cornea through production of lipoxin A4 (LXA(4)) and docosahexaenoic acid-derived neuroprotectin D1 (NPD1; 10R,17S-HDHA), both lipid autacoids exhibit anti-inflammatory and neuroprotective properties. Furthermore, it may regulate actin polymerization which is crucial for several biological processes such as the phagocytosis of apoptotic cells. It is also implicated in the generation of endogenous ligands for peroxisome proliferator activated receptor (PPAR-gamma), hence modulating macrophage development and function. It may also exert a negative effect on skeletal development by regulating bone mass through this pathway. As well as participates in ER stress and downstream inflammation in adipocytes, pancreatic islets, and liver (By similarity). Finally, it is also involved in the cellular response to IL13/interleukin-13 (By similarity).</text>
</comment>
<comment type="catalytic activity">
    <reaction evidence="9 11 12">
        <text>(5Z,8Z,11Z,14Z)-eicosatetraenoate + O2 = (12S)-hydroperoxy-(5Z,8Z,10E,14Z)-eicosatetraenoate</text>
        <dbReference type="Rhea" id="RHEA:10428"/>
        <dbReference type="ChEBI" id="CHEBI:15379"/>
        <dbReference type="ChEBI" id="CHEBI:32395"/>
        <dbReference type="ChEBI" id="CHEBI:57444"/>
        <dbReference type="EC" id="1.13.11.31"/>
    </reaction>
    <physiologicalReaction direction="left-to-right" evidence="16">
        <dbReference type="Rhea" id="RHEA:10429"/>
    </physiologicalReaction>
</comment>
<comment type="catalytic activity">
    <reaction evidence="11 12">
        <text>(5Z,8Z,11Z,14Z)-eicosatetraenoate + O2 = (15S)-hydroperoxy-(5Z,8Z,11Z,13E)-eicosatetraenoate</text>
        <dbReference type="Rhea" id="RHEA:16869"/>
        <dbReference type="ChEBI" id="CHEBI:15379"/>
        <dbReference type="ChEBI" id="CHEBI:32395"/>
        <dbReference type="ChEBI" id="CHEBI:57446"/>
        <dbReference type="EC" id="1.13.11.33"/>
    </reaction>
</comment>
<comment type="catalytic activity">
    <reaction evidence="3">
        <text>(9Z,12Z)-octadecadienoate + O2 = (13S)-hydroperoxy-(9Z,11E)-octadecadienoate</text>
        <dbReference type="Rhea" id="RHEA:22780"/>
        <dbReference type="ChEBI" id="CHEBI:15379"/>
        <dbReference type="ChEBI" id="CHEBI:30245"/>
        <dbReference type="ChEBI" id="CHEBI:57466"/>
        <dbReference type="EC" id="1.13.11.12"/>
    </reaction>
    <physiologicalReaction direction="left-to-right" evidence="3">
        <dbReference type="Rhea" id="RHEA:22781"/>
    </physiologicalReaction>
</comment>
<comment type="catalytic activity">
    <reaction evidence="9">
        <text>(12S)-hydroperoxy-(5Z,8Z,10E,14Z)-eicosatetraenoate = (8S)-hydroxy-(11S,12S)-epoxy-(5Z,9E,14Z)-eicosatrienoate</text>
        <dbReference type="Rhea" id="RHEA:50216"/>
        <dbReference type="ChEBI" id="CHEBI:57444"/>
        <dbReference type="ChEBI" id="CHEBI:132129"/>
    </reaction>
    <physiologicalReaction direction="left-to-right" evidence="16">
        <dbReference type="Rhea" id="RHEA:50217"/>
    </physiologicalReaction>
</comment>
<comment type="catalytic activity">
    <reaction evidence="3">
        <text>(5Z,8Z,11Z,14Z)-eicosatetraenoate + 2 O2 = (14R,15S)-dihydroperoxy-(5Z,8Z,10E,12E)-eicosatetraenoate</text>
        <dbReference type="Rhea" id="RHEA:50928"/>
        <dbReference type="ChEBI" id="CHEBI:15379"/>
        <dbReference type="ChEBI" id="CHEBI:32395"/>
        <dbReference type="ChEBI" id="CHEBI:133900"/>
    </reaction>
    <physiologicalReaction direction="left-to-right" evidence="3">
        <dbReference type="Rhea" id="RHEA:50929"/>
    </physiologicalReaction>
</comment>
<comment type="catalytic activity">
    <reaction evidence="3">
        <text>(5Z,8Z,11Z,14Z)-eicosatetraenoate + 2 O2 = (8S,15S)-dihydroperoxy-(5Z,9E,11Z,13E)-eicosatetraenoate</text>
        <dbReference type="Rhea" id="RHEA:50924"/>
        <dbReference type="ChEBI" id="CHEBI:15379"/>
        <dbReference type="ChEBI" id="CHEBI:32395"/>
        <dbReference type="ChEBI" id="CHEBI:133899"/>
    </reaction>
    <physiologicalReaction direction="left-to-right" evidence="3">
        <dbReference type="Rhea" id="RHEA:50925"/>
    </physiologicalReaction>
</comment>
<comment type="catalytic activity">
    <reaction evidence="3">
        <text>(14S,15R)-epoxy-(5Z,8Z,11Z)-eicosatrienoate + O2 = (8S)-hydroperoxy-(14S,15R)-epoxy-(5Z,9E,11Z)-eicosatrienoate</text>
        <dbReference type="Rhea" id="RHEA:50288"/>
        <dbReference type="ChEBI" id="CHEBI:15379"/>
        <dbReference type="ChEBI" id="CHEBI:131964"/>
        <dbReference type="ChEBI" id="CHEBI:132068"/>
    </reaction>
    <physiologicalReaction direction="left-to-right" evidence="3">
        <dbReference type="Rhea" id="RHEA:50289"/>
    </physiologicalReaction>
</comment>
<comment type="catalytic activity">
    <reaction evidence="3">
        <text>(14S,15R)-epoxy-(5Z,8Z,11Z)-eicosatrienoate + O2 = (12S)-hydroperoxy-(14S,15R)-epoxy-(5Z,8Z,10E)-eicosatrienoate</text>
        <dbReference type="Rhea" id="RHEA:50284"/>
        <dbReference type="ChEBI" id="CHEBI:15379"/>
        <dbReference type="ChEBI" id="CHEBI:131964"/>
        <dbReference type="ChEBI" id="CHEBI:132065"/>
    </reaction>
    <physiologicalReaction direction="left-to-right" evidence="3">
        <dbReference type="Rhea" id="RHEA:50285"/>
    </physiologicalReaction>
</comment>
<comment type="catalytic activity">
    <reaction evidence="3">
        <text>(14R,15S)-epoxy-(5Z,8Z,11Z)-eicosatrienoate + O2 = (5S)-hydroperoxy-(14R,15S)-epoxy-(6E,8Z,11Z)-eicosatrienoate</text>
        <dbReference type="Rhea" id="RHEA:50280"/>
        <dbReference type="ChEBI" id="CHEBI:15379"/>
        <dbReference type="ChEBI" id="CHEBI:131965"/>
        <dbReference type="ChEBI" id="CHEBI:132067"/>
    </reaction>
    <physiologicalReaction direction="left-to-right" evidence="3">
        <dbReference type="Rhea" id="RHEA:50281"/>
    </physiologicalReaction>
</comment>
<comment type="catalytic activity">
    <reaction evidence="3">
        <text>(14R,15S)-epoxy-(5Z,8Z,11Z)-eicosatrienoate + O2 = (12S)-hydroperoxy-(14R,15S)-epoxy-(5Z,8Z,10E)-eicosatrienoate</text>
        <dbReference type="Rhea" id="RHEA:50276"/>
        <dbReference type="ChEBI" id="CHEBI:15379"/>
        <dbReference type="ChEBI" id="CHEBI:131965"/>
        <dbReference type="ChEBI" id="CHEBI:132063"/>
    </reaction>
    <physiologicalReaction direction="left-to-right" evidence="3">
        <dbReference type="Rhea" id="RHEA:50277"/>
    </physiologicalReaction>
</comment>
<comment type="catalytic activity">
    <reaction evidence="3">
        <text>(15R)-hydroperoxy-(5Z,8Z,11Z,13E)-eicosatetraenoate = 15-oxo-(5Z,8Z,11Z,13E)-eicosatetraenoate + H2O</text>
        <dbReference type="Rhea" id="RHEA:50152"/>
        <dbReference type="ChEBI" id="CHEBI:15377"/>
        <dbReference type="ChEBI" id="CHEBI:57410"/>
        <dbReference type="ChEBI" id="CHEBI:82626"/>
    </reaction>
    <physiologicalReaction direction="left-to-right" evidence="3">
        <dbReference type="Rhea" id="RHEA:50153"/>
    </physiologicalReaction>
</comment>
<comment type="catalytic activity">
    <reaction evidence="3">
        <text>(15S)-hydroperoxy-(5Z,8Z,11Z,13E)-eicosatetraenoate = (14S,15S)-epoxy-(5Z,8Z,10E,12E)-eicosatetraenoate + H2O</text>
        <dbReference type="Rhea" id="RHEA:50140"/>
        <dbReference type="ChEBI" id="CHEBI:15377"/>
        <dbReference type="ChEBI" id="CHEBI:57446"/>
        <dbReference type="ChEBI" id="CHEBI:132070"/>
    </reaction>
    <physiologicalReaction direction="left-to-right" evidence="3">
        <dbReference type="Rhea" id="RHEA:50141"/>
    </physiologicalReaction>
</comment>
<comment type="catalytic activity">
    <reaction evidence="4">
        <text>(4Z,7Z,10Z,13Z,16Z)-docosapentaenoate + O2 = 14-hydroperoxy-(4Z,7Z,10Z,12E,16Z)-docosapentaenoate</text>
        <dbReference type="Rhea" id="RHEA:50824"/>
        <dbReference type="ChEBI" id="CHEBI:15379"/>
        <dbReference type="ChEBI" id="CHEBI:77226"/>
        <dbReference type="ChEBI" id="CHEBI:133799"/>
    </reaction>
    <physiologicalReaction direction="left-to-right" evidence="4">
        <dbReference type="Rhea" id="RHEA:50825"/>
    </physiologicalReaction>
</comment>
<comment type="catalytic activity">
    <reaction evidence="4">
        <text>(7Z,10Z,13Z,16Z,19Z)-docosapentaenoate + O2 = 14-hydroperoxy-(7Z,10Z,12E,16Z,19Z)-docosapentaenoate</text>
        <dbReference type="Rhea" id="RHEA:50836"/>
        <dbReference type="ChEBI" id="CHEBI:15379"/>
        <dbReference type="ChEBI" id="CHEBI:77224"/>
        <dbReference type="ChEBI" id="CHEBI:133798"/>
    </reaction>
    <physiologicalReaction direction="left-to-right" evidence="4">
        <dbReference type="Rhea" id="RHEA:50837"/>
    </physiologicalReaction>
</comment>
<comment type="catalytic activity">
    <reaction evidence="3">
        <text>(4Z,7Z,10Z,13Z,16Z,19Z)-docosahexaenoate + O2 = (14S)-hydroperoxy-(4Z,7Z,10Z,12E,16Z,19Z)-docosahexaenoate</text>
        <dbReference type="Rhea" id="RHEA:41332"/>
        <dbReference type="ChEBI" id="CHEBI:15379"/>
        <dbReference type="ChEBI" id="CHEBI:77016"/>
        <dbReference type="ChEBI" id="CHEBI:78048"/>
    </reaction>
    <physiologicalReaction direction="left-to-right" evidence="3">
        <dbReference type="Rhea" id="RHEA:41333"/>
    </physiologicalReaction>
</comment>
<comment type="catalytic activity">
    <reaction evidence="3">
        <text>(4Z,7Z,10Z,13Z,16Z,19Z)-docosahexaenoate + O2 = (17S)-hydroperoxy-(4Z,7Z,10Z,13Z,15E,19Z)-docosahexaenoate</text>
        <dbReference type="Rhea" id="RHEA:50840"/>
        <dbReference type="ChEBI" id="CHEBI:15379"/>
        <dbReference type="ChEBI" id="CHEBI:77016"/>
        <dbReference type="ChEBI" id="CHEBI:133795"/>
    </reaction>
    <physiologicalReaction direction="left-to-right" evidence="3">
        <dbReference type="Rhea" id="RHEA:50841"/>
    </physiologicalReaction>
</comment>
<comment type="catalytic activity">
    <reaction evidence="3">
        <text>(7S)-hydroperoxy-(4Z,8E,10Z,13Z,16Z,19Z)-docosahexaenoate + O2 = (7S,14S)-dihydroperoxy-(4Z,8E,10Z,12E,16Z,19Z)-docosahexaenoate</text>
        <dbReference type="Rhea" id="RHEA:64724"/>
        <dbReference type="ChEBI" id="CHEBI:15379"/>
        <dbReference type="ChEBI" id="CHEBI:156049"/>
        <dbReference type="ChEBI" id="CHEBI:156082"/>
    </reaction>
    <physiologicalReaction direction="left-to-right" evidence="3">
        <dbReference type="Rhea" id="RHEA:64725"/>
    </physiologicalReaction>
</comment>
<comment type="catalytic activity">
    <reaction evidence="3">
        <text>(7S)-hydroperoxy-(4Z,8E,10Z,13Z,16Z,19Z)-docosahexaenoate + O2 = (7S,17S)-dihydroperoxy-(4Z,8E,10Z,13Z,15E,19Z)-docosahexaenoate</text>
        <dbReference type="Rhea" id="RHEA:64728"/>
        <dbReference type="ChEBI" id="CHEBI:15379"/>
        <dbReference type="ChEBI" id="CHEBI:140349"/>
        <dbReference type="ChEBI" id="CHEBI:156049"/>
    </reaction>
    <physiologicalReaction direction="left-to-right" evidence="3">
        <dbReference type="Rhea" id="RHEA:64729"/>
    </physiologicalReaction>
</comment>
<comment type="catalytic activity">
    <reaction evidence="3">
        <text>(4Z,7Z,10Z,13Z,16Z,19Z)-docosahexaenoate + O2 = (11S)-hydroperoxy-(4Z,7Z,9E,13Z,16Z,19Z)-docosahexaenoate</text>
        <dbReference type="Rhea" id="RHEA:64732"/>
        <dbReference type="ChEBI" id="CHEBI:15379"/>
        <dbReference type="ChEBI" id="CHEBI:77016"/>
        <dbReference type="ChEBI" id="CHEBI:156131"/>
    </reaction>
    <physiologicalReaction direction="left-to-right" evidence="3">
        <dbReference type="Rhea" id="RHEA:64733"/>
    </physiologicalReaction>
</comment>
<comment type="catalytic activity">
    <reaction evidence="4">
        <text>N-(5Z,8Z,11Z,14Z)-eicosatetraenoyl-taurine + O2 = N-(12S)-hydroperoxy-(5Z,8Z,10E,14Z)-eicosatetraenoyl-taurine</text>
        <dbReference type="Rhea" id="RHEA:50160"/>
        <dbReference type="ChEBI" id="CHEBI:15379"/>
        <dbReference type="ChEBI" id="CHEBI:132060"/>
        <dbReference type="ChEBI" id="CHEBI:132061"/>
    </reaction>
    <physiologicalReaction direction="left-to-right" evidence="4">
        <dbReference type="Rhea" id="RHEA:50161"/>
    </physiologicalReaction>
</comment>
<comment type="catalytic activity">
    <reaction evidence="4">
        <text>N-(5Z,8Z,11Z,14Z)-eicosatetraenoyl-gamma-aminobutanoate + O2 = N-(12S)-hydroperoxy-(5Z,8Z,10E,14Z)-eicosatetraenoyl-gamma-aminobutanoate</text>
        <dbReference type="Rhea" id="RHEA:50176"/>
        <dbReference type="ChEBI" id="CHEBI:15379"/>
        <dbReference type="ChEBI" id="CHEBI:132072"/>
        <dbReference type="ChEBI" id="CHEBI:132075"/>
    </reaction>
    <physiologicalReaction direction="left-to-right" evidence="4">
        <dbReference type="Rhea" id="RHEA:50177"/>
    </physiologicalReaction>
</comment>
<comment type="catalytic activity">
    <reaction evidence="4">
        <text>N-(5Z,8Z,11Z,14Z)-eicosatetraenoyl-glycine + O2 = N-(12S)-hydroperoxy-(5Z,8Z,10E,14Z)-eicosatetraenoyl-glycine</text>
        <dbReference type="Rhea" id="RHEA:50168"/>
        <dbReference type="ChEBI" id="CHEBI:15379"/>
        <dbReference type="ChEBI" id="CHEBI:59002"/>
        <dbReference type="ChEBI" id="CHEBI:132073"/>
    </reaction>
    <physiologicalReaction direction="left-to-right" evidence="4">
        <dbReference type="Rhea" id="RHEA:50169"/>
    </physiologicalReaction>
</comment>
<comment type="catalytic activity">
    <reaction evidence="4">
        <text>N-(5Z,8Z,11Z,14Z)-eicosatetraenoyl-L-alanine + O2 = N-(12S)-hydroperoxy-(5Z,8Z,10E,14Z)-eicosatetraenoyl-alanine</text>
        <dbReference type="Rhea" id="RHEA:50172"/>
        <dbReference type="ChEBI" id="CHEBI:15379"/>
        <dbReference type="ChEBI" id="CHEBI:132071"/>
        <dbReference type="ChEBI" id="CHEBI:132074"/>
    </reaction>
    <physiologicalReaction direction="left-to-right" evidence="4">
        <dbReference type="Rhea" id="RHEA:50173"/>
    </physiologicalReaction>
</comment>
<comment type="catalytic activity">
    <reaction evidence="2">
        <text>N-(5Z,8Z,11Z,14Z)-eicosatetraenoyl-taurine + O2 = N-(15S)-hydroperoxy-(5Z,8Z,11Z,13E)-eicosatetraenoyl-taurine</text>
        <dbReference type="Rhea" id="RHEA:50156"/>
        <dbReference type="ChEBI" id="CHEBI:15379"/>
        <dbReference type="ChEBI" id="CHEBI:132060"/>
        <dbReference type="ChEBI" id="CHEBI:132062"/>
    </reaction>
    <physiologicalReaction direction="left-to-right" evidence="2">
        <dbReference type="Rhea" id="RHEA:50157"/>
    </physiologicalReaction>
</comment>
<comment type="catalytic activity">
    <reaction evidence="2">
        <text>N-(5Z,8Z,11Z,14Z)-eicosatetraenoyl-gamma-aminobutanoate + O2 = N-(15S)-hydroperoxy-(5Z,8Z,11Z,13E)-eicosatetraenoyl-gamma-aminobutanoate</text>
        <dbReference type="Rhea" id="RHEA:50180"/>
        <dbReference type="ChEBI" id="CHEBI:15379"/>
        <dbReference type="ChEBI" id="CHEBI:132072"/>
        <dbReference type="ChEBI" id="CHEBI:132078"/>
    </reaction>
    <physiologicalReaction direction="left-to-right" evidence="2">
        <dbReference type="Rhea" id="RHEA:50181"/>
    </physiologicalReaction>
</comment>
<comment type="catalytic activity">
    <reaction evidence="2">
        <text>N-(5Z,8Z,11Z,14Z)-eicosatetraenoyl-glycine + O2 = N-(15S)-hydroperoxy-(5Z,8Z,11Z,13E)-eicosatetraenoyl-glycine</text>
        <dbReference type="Rhea" id="RHEA:50188"/>
        <dbReference type="ChEBI" id="CHEBI:15379"/>
        <dbReference type="ChEBI" id="CHEBI:59002"/>
        <dbReference type="ChEBI" id="CHEBI:132076"/>
    </reaction>
    <physiologicalReaction direction="left-to-right" evidence="2">
        <dbReference type="Rhea" id="RHEA:50189"/>
    </physiologicalReaction>
</comment>
<comment type="catalytic activity">
    <reaction evidence="2">
        <text>N-(5Z,8Z,11Z,14Z)-eicosatetraenoyl-L-alanine + O2 = N-(15S)-hydroperoxy-(5Z,8Z,11Z,13E)-eicosatetraenoyl-alanine</text>
        <dbReference type="Rhea" id="RHEA:50184"/>
        <dbReference type="ChEBI" id="CHEBI:15379"/>
        <dbReference type="ChEBI" id="CHEBI:132071"/>
        <dbReference type="ChEBI" id="CHEBI:132077"/>
    </reaction>
    <physiologicalReaction direction="left-to-right" evidence="2">
        <dbReference type="Rhea" id="RHEA:50185"/>
    </physiologicalReaction>
</comment>
<comment type="cofactor">
    <cofactor evidence="4 7">
        <name>Fe cation</name>
        <dbReference type="ChEBI" id="CHEBI:24875"/>
    </cofactor>
    <text evidence="4 7">Binds 1 Fe cation per subunit.</text>
</comment>
<comment type="pathway">
    <text evidence="9 11 12">Lipid metabolism; hydroperoxy eicosatetraenoic acid biosynthesis.</text>
</comment>
<comment type="subunit">
    <text evidence="3">Interacts with PEBP1; in response to IL13/interleukin-13, prevents the interaction of PEBP1 with RAF1 to activate the ERK signaling cascade.</text>
</comment>
<comment type="subcellular location">
    <subcellularLocation>
        <location evidence="9 11">Cytoplasm</location>
        <location evidence="9 11">Cytosol</location>
    </subcellularLocation>
    <subcellularLocation>
        <location evidence="3">Cell membrane</location>
        <topology evidence="3">Peripheral membrane protein</topology>
    </subcellularLocation>
    <subcellularLocation>
        <location evidence="3">Lipid droplet</location>
    </subcellularLocation>
    <text evidence="5">Predominantly cytosolic; becomes enriched at membranes upon calcium binding. Translocates from the cytosol to the plasma membrane when stimulated by IL13/interleukin-13 and in macrophages binding apoptotic cells.</text>
</comment>
<comment type="tissue specificity">
    <text evidence="12">Detected in leukocytes, lung and aorta.</text>
</comment>
<comment type="domain">
    <text evidence="1">The PLAT domain can bind calcium ions; this promotes association with membranes.</text>
</comment>
<comment type="similarity">
    <text evidence="15">Belongs to the lipoxygenase family.</text>
</comment>
<gene>
    <name evidence="17" type="primary">Alox15</name>
    <name type="synonym">Alox12l</name>
</gene>